<protein>
    <recommendedName>
        <fullName evidence="2 6">Protein teflon</fullName>
    </recommendedName>
</protein>
<proteinExistence type="inferred from homology"/>
<reference evidence="7" key="1">
    <citation type="journal article" date="2007" name="Nature">
        <title>Evolution of genes and genomes on the Drosophila phylogeny.</title>
        <authorList>
            <consortium name="Drosophila 12 genomes consortium"/>
        </authorList>
    </citation>
    <scope>NUCLEOTIDE SEQUENCE [LARGE SCALE GENOMIC DNA]</scope>
    <source>
        <strain evidence="7">Tai18E2 / Tucson 14021-0261.01</strain>
    </source>
</reference>
<reference evidence="6" key="2">
    <citation type="journal article" date="2009" name="Genetics">
        <title>Molecular population genetics and evolution of Drosophila meiosis genes.</title>
        <authorList>
            <person name="Anderson J.A."/>
            <person name="Gilliland W.D."/>
            <person name="Langley C.H."/>
        </authorList>
    </citation>
    <scope>NUCLEOTIDE SEQUENCE [GENOMIC DNA] OF 74-429</scope>
</reference>
<sequence length="648" mass="73221">MSTFLDMLSGSQCVSLEKCGDVVVSTNDCMIALYCHFCRDLFTQLPEFLRHLQGAHSDVLHFTKEHNVYSVEELMSGEQEDAQSVGHNSSSSDSRGLAKSEDSRATEATEDNSDNSPVKSEEKGSQNEINLLAEVTNILLQTKEKEHINDKLKPENGGFKGPRKKANSESNSLRICNLKSHTIARTSRKRMSIIKNRILRVIDSDLSANHEMKPSEPNSKILITEPIQEANIPGICLETPPKPIPSSSNLSVRKSSLTEANVSLAHTNYAAKKTTPTLPKLLNCAPKPILPSQQAQVHSGSSGIHEVYHISKAASQVPKEMKSFPIEITQIDVFPPRILPETSTTSDKEEDVNAPVENNTRSLYNAQNLPKDKPKKFFKKRGELWMKNEGKITKSKVNPIIVKQVQTSNVKSSPGKTQIRSSDKTKCFASEFNSTKNRKLKMENFIALKKEDPCSIRSIRLNKMATIGNCEILKVVGLPAITDNQIEDTLLQDELETMRKKADQFSKIYRKYDSIWNYRKIVPPGKPEHISQKMFALTREVNQTMGCNLPNSAIKNIINQISVWHYNIYTKNIVLDTISETARYTLNLFSFLPVSFAYFCKCCDDIFTLNEDYIRHLVSQQARYQCTKCIKTFKYQGHYDKHMRTVHP</sequence>
<accession>B4P8I0</accession>
<accession>B6UYB9</accession>
<organism>
    <name type="scientific">Drosophila yakuba</name>
    <name type="common">Fruit fly</name>
    <dbReference type="NCBI Taxonomy" id="7245"/>
    <lineage>
        <taxon>Eukaryota</taxon>
        <taxon>Metazoa</taxon>
        <taxon>Ecdysozoa</taxon>
        <taxon>Arthropoda</taxon>
        <taxon>Hexapoda</taxon>
        <taxon>Insecta</taxon>
        <taxon>Pterygota</taxon>
        <taxon>Neoptera</taxon>
        <taxon>Endopterygota</taxon>
        <taxon>Diptera</taxon>
        <taxon>Brachycera</taxon>
        <taxon>Muscomorpha</taxon>
        <taxon>Ephydroidea</taxon>
        <taxon>Drosophilidae</taxon>
        <taxon>Drosophila</taxon>
        <taxon>Sophophora</taxon>
    </lineage>
</organism>
<feature type="chain" id="PRO_0000377413" description="Protein teflon">
    <location>
        <begin position="1"/>
        <end position="648"/>
    </location>
</feature>
<feature type="zinc finger region" description="C2H2-type 1" evidence="3">
    <location>
        <begin position="33"/>
        <end position="56"/>
    </location>
</feature>
<feature type="zinc finger region" description="C2H2-type 2; degenerate" evidence="3">
    <location>
        <begin position="598"/>
        <end position="620"/>
    </location>
</feature>
<feature type="zinc finger region" description="C2H2-type 3" evidence="3">
    <location>
        <begin position="624"/>
        <end position="647"/>
    </location>
</feature>
<feature type="region of interest" description="Disordered" evidence="4">
    <location>
        <begin position="76"/>
        <end position="127"/>
    </location>
</feature>
<feature type="region of interest" description="Disordered" evidence="4">
    <location>
        <begin position="146"/>
        <end position="170"/>
    </location>
</feature>
<feature type="compositionally biased region" description="Polar residues" evidence="4">
    <location>
        <begin position="85"/>
        <end position="94"/>
    </location>
</feature>
<feature type="compositionally biased region" description="Basic and acidic residues" evidence="4">
    <location>
        <begin position="96"/>
        <end position="107"/>
    </location>
</feature>
<feature type="sequence conflict" description="In Ref. 2; ACI96575." evidence="5" ref="2">
    <location>
        <begin position="147"/>
        <end position="151"/>
    </location>
</feature>
<feature type="sequence conflict" description="In Ref. 2; ACI96575." evidence="5" ref="2">
    <location>
        <begin position="262"/>
        <end position="263"/>
    </location>
</feature>
<feature type="sequence conflict" description="In Ref. 2; ACI96575." evidence="5" ref="2">
    <location>
        <begin position="310"/>
        <end position="311"/>
    </location>
</feature>
<gene>
    <name evidence="2" type="primary">tef</name>
    <name type="ORF">GE14219</name>
</gene>
<evidence type="ECO:0000250" key="1"/>
<evidence type="ECO:0000250" key="2">
    <source>
        <dbReference type="UniProtKB" id="Q7K4M4"/>
    </source>
</evidence>
<evidence type="ECO:0000255" key="3">
    <source>
        <dbReference type="PROSITE-ProRule" id="PRU00042"/>
    </source>
</evidence>
<evidence type="ECO:0000256" key="4">
    <source>
        <dbReference type="SAM" id="MobiDB-lite"/>
    </source>
</evidence>
<evidence type="ECO:0000305" key="5"/>
<evidence type="ECO:0000312" key="6">
    <source>
        <dbReference type="EMBL" id="ACI96575.1"/>
    </source>
</evidence>
<evidence type="ECO:0000312" key="7">
    <source>
        <dbReference type="EMBL" id="EDW92197.1"/>
    </source>
</evidence>
<comment type="function">
    <text evidence="2">Specifically required in males for proper segregation of autosomal bivalents at meiosis I. Expression is required in the male germ line prior to spermatocyte stage S4. May have a role as a bridging molecule maintaining adhesion to hold autosome bivalents together via heterochromatic connections (By similarity).</text>
</comment>
<comment type="subcellular location">
    <subcellularLocation>
        <location evidence="2">Nucleus</location>
    </subcellularLocation>
    <subcellularLocation>
        <location evidence="1">Chromosome</location>
    </subcellularLocation>
    <text evidence="2">Male meiotic chromosomes.</text>
</comment>
<comment type="miscellaneous">
    <text evidence="2">Drosophilid specific gene duplication generates rgr and tef. Teflon has a function unique to Drosophilids.</text>
</comment>
<comment type="similarity">
    <text evidence="5">Belongs to the Teflon family.</text>
</comment>
<name>TEF_DROYA</name>
<keyword id="KW-0131">Cell cycle</keyword>
<keyword id="KW-0158">Chromosome</keyword>
<keyword id="KW-0159">Chromosome partition</keyword>
<keyword id="KW-0469">Meiosis</keyword>
<keyword id="KW-0479">Metal-binding</keyword>
<keyword id="KW-0539">Nucleus</keyword>
<keyword id="KW-0677">Repeat</keyword>
<keyword id="KW-0862">Zinc</keyword>
<keyword id="KW-0863">Zinc-finger</keyword>
<dbReference type="EMBL" id="CM000158">
    <property type="protein sequence ID" value="EDW92197.1"/>
    <property type="molecule type" value="Genomic_DNA"/>
</dbReference>
<dbReference type="EMBL" id="FJ219517">
    <property type="protein sequence ID" value="ACI96575.1"/>
    <property type="molecule type" value="Genomic_DNA"/>
</dbReference>
<dbReference type="SMR" id="B4P8I0"/>
<dbReference type="EnsemblMetazoa" id="FBtr0260737">
    <property type="protein sequence ID" value="FBpp0259229"/>
    <property type="gene ID" value="FBgn0231839"/>
</dbReference>
<dbReference type="EnsemblMetazoa" id="XM_002092449.4">
    <property type="protein sequence ID" value="XP_002092485.1"/>
    <property type="gene ID" value="LOC6531694"/>
</dbReference>
<dbReference type="GeneID" id="6531694"/>
<dbReference type="KEGG" id="dya:Dyak_GE14219"/>
<dbReference type="eggNOG" id="ENOG502T9CV">
    <property type="taxonomic scope" value="Eukaryota"/>
</dbReference>
<dbReference type="HOGENOM" id="CLU_014432_0_0_1"/>
<dbReference type="OMA" id="TKEHNVY"/>
<dbReference type="OrthoDB" id="8067562at2759"/>
<dbReference type="PhylomeDB" id="B4P8I0"/>
<dbReference type="Proteomes" id="UP000002282">
    <property type="component" value="Chromosome 2R"/>
</dbReference>
<dbReference type="GO" id="GO:0030849">
    <property type="term" value="C:autosome"/>
    <property type="evidence" value="ECO:0000250"/>
    <property type="project" value="UniProtKB"/>
</dbReference>
<dbReference type="GO" id="GO:0005634">
    <property type="term" value="C:nucleus"/>
    <property type="evidence" value="ECO:0007669"/>
    <property type="project" value="UniProtKB-SubCell"/>
</dbReference>
<dbReference type="GO" id="GO:0008270">
    <property type="term" value="F:zinc ion binding"/>
    <property type="evidence" value="ECO:0007669"/>
    <property type="project" value="UniProtKB-KW"/>
</dbReference>
<dbReference type="GO" id="GO:0051308">
    <property type="term" value="P:male meiosis chromosome separation"/>
    <property type="evidence" value="ECO:0000250"/>
    <property type="project" value="UniProtKB"/>
</dbReference>
<dbReference type="GO" id="GO:0007141">
    <property type="term" value="P:male meiosis I"/>
    <property type="evidence" value="ECO:0007669"/>
    <property type="project" value="EnsemblMetazoa"/>
</dbReference>
<dbReference type="Gene3D" id="3.30.160.60">
    <property type="entry name" value="Classic Zinc Finger"/>
    <property type="match status" value="1"/>
</dbReference>
<dbReference type="InterPro" id="IPR013087">
    <property type="entry name" value="Znf_C2H2_type"/>
</dbReference>
<dbReference type="SMART" id="SM00355">
    <property type="entry name" value="ZnF_C2H2"/>
    <property type="match status" value="3"/>
</dbReference>
<dbReference type="PROSITE" id="PS00028">
    <property type="entry name" value="ZINC_FINGER_C2H2_1"/>
    <property type="match status" value="2"/>
</dbReference>
<dbReference type="PROSITE" id="PS50157">
    <property type="entry name" value="ZINC_FINGER_C2H2_2"/>
    <property type="match status" value="1"/>
</dbReference>